<reference key="1">
    <citation type="journal article" date="2009" name="PLoS Genet.">
        <title>Organised genome dynamics in the Escherichia coli species results in highly diverse adaptive paths.</title>
        <authorList>
            <person name="Touchon M."/>
            <person name="Hoede C."/>
            <person name="Tenaillon O."/>
            <person name="Barbe V."/>
            <person name="Baeriswyl S."/>
            <person name="Bidet P."/>
            <person name="Bingen E."/>
            <person name="Bonacorsi S."/>
            <person name="Bouchier C."/>
            <person name="Bouvet O."/>
            <person name="Calteau A."/>
            <person name="Chiapello H."/>
            <person name="Clermont O."/>
            <person name="Cruveiller S."/>
            <person name="Danchin A."/>
            <person name="Diard M."/>
            <person name="Dossat C."/>
            <person name="Karoui M.E."/>
            <person name="Frapy E."/>
            <person name="Garry L."/>
            <person name="Ghigo J.M."/>
            <person name="Gilles A.M."/>
            <person name="Johnson J."/>
            <person name="Le Bouguenec C."/>
            <person name="Lescat M."/>
            <person name="Mangenot S."/>
            <person name="Martinez-Jehanne V."/>
            <person name="Matic I."/>
            <person name="Nassif X."/>
            <person name="Oztas S."/>
            <person name="Petit M.A."/>
            <person name="Pichon C."/>
            <person name="Rouy Z."/>
            <person name="Ruf C.S."/>
            <person name="Schneider D."/>
            <person name="Tourret J."/>
            <person name="Vacherie B."/>
            <person name="Vallenet D."/>
            <person name="Medigue C."/>
            <person name="Rocha E.P.C."/>
            <person name="Denamur E."/>
        </authorList>
    </citation>
    <scope>NUCLEOTIDE SEQUENCE [LARGE SCALE GENOMIC DNA]</scope>
    <source>
        <strain>ATCC 35469 / DSM 13698 / BCRC 15582 / CCUG 18766 / IAM 14443 / JCM 21226 / LMG 7866 / NBRC 102419 / NCTC 12128 / CDC 0568-73</strain>
    </source>
</reference>
<comment type="function">
    <text evidence="1">Catalyzes the reduction of the glycolytic intermediate dihydroxyacetone phosphate (DHAP) to sn-glycerol 3-phosphate (G3P), the key precursor for phospholipid synthesis.</text>
</comment>
<comment type="catalytic activity">
    <reaction evidence="1">
        <text>sn-glycerol 3-phosphate + NAD(+) = dihydroxyacetone phosphate + NADH + H(+)</text>
        <dbReference type="Rhea" id="RHEA:11092"/>
        <dbReference type="ChEBI" id="CHEBI:15378"/>
        <dbReference type="ChEBI" id="CHEBI:57540"/>
        <dbReference type="ChEBI" id="CHEBI:57597"/>
        <dbReference type="ChEBI" id="CHEBI:57642"/>
        <dbReference type="ChEBI" id="CHEBI:57945"/>
        <dbReference type="EC" id="1.1.1.94"/>
    </reaction>
    <physiologicalReaction direction="right-to-left" evidence="1">
        <dbReference type="Rhea" id="RHEA:11094"/>
    </physiologicalReaction>
</comment>
<comment type="catalytic activity">
    <reaction evidence="1">
        <text>sn-glycerol 3-phosphate + NADP(+) = dihydroxyacetone phosphate + NADPH + H(+)</text>
        <dbReference type="Rhea" id="RHEA:11096"/>
        <dbReference type="ChEBI" id="CHEBI:15378"/>
        <dbReference type="ChEBI" id="CHEBI:57597"/>
        <dbReference type="ChEBI" id="CHEBI:57642"/>
        <dbReference type="ChEBI" id="CHEBI:57783"/>
        <dbReference type="ChEBI" id="CHEBI:58349"/>
        <dbReference type="EC" id="1.1.1.94"/>
    </reaction>
    <physiologicalReaction direction="right-to-left" evidence="1">
        <dbReference type="Rhea" id="RHEA:11098"/>
    </physiologicalReaction>
</comment>
<comment type="pathway">
    <text evidence="1">Membrane lipid metabolism; glycerophospholipid metabolism.</text>
</comment>
<comment type="subcellular location">
    <subcellularLocation>
        <location evidence="1">Cytoplasm</location>
    </subcellularLocation>
</comment>
<comment type="similarity">
    <text evidence="1">Belongs to the NAD-dependent glycerol-3-phosphate dehydrogenase family.</text>
</comment>
<keyword id="KW-0963">Cytoplasm</keyword>
<keyword id="KW-0444">Lipid biosynthesis</keyword>
<keyword id="KW-0443">Lipid metabolism</keyword>
<keyword id="KW-0520">NAD</keyword>
<keyword id="KW-0521">NADP</keyword>
<keyword id="KW-0547">Nucleotide-binding</keyword>
<keyword id="KW-0560">Oxidoreductase</keyword>
<keyword id="KW-0594">Phospholipid biosynthesis</keyword>
<keyword id="KW-1208">Phospholipid metabolism</keyword>
<protein>
    <recommendedName>
        <fullName evidence="1">Glycerol-3-phosphate dehydrogenase [NAD(P)+]</fullName>
        <ecNumber evidence="1">1.1.1.94</ecNumber>
    </recommendedName>
    <alternativeName>
        <fullName evidence="1">NAD(P)(+)-dependent glycerol-3-phosphate dehydrogenase</fullName>
    </alternativeName>
    <alternativeName>
        <fullName evidence="1">NAD(P)H-dependent dihydroxyacetone-phosphate reductase</fullName>
    </alternativeName>
</protein>
<organism>
    <name type="scientific">Escherichia fergusonii (strain ATCC 35469 / DSM 13698 / CCUG 18766 / IAM 14443 / JCM 21226 / LMG 7866 / NBRC 102419 / NCTC 12128 / CDC 0568-73)</name>
    <dbReference type="NCBI Taxonomy" id="585054"/>
    <lineage>
        <taxon>Bacteria</taxon>
        <taxon>Pseudomonadati</taxon>
        <taxon>Pseudomonadota</taxon>
        <taxon>Gammaproteobacteria</taxon>
        <taxon>Enterobacterales</taxon>
        <taxon>Enterobacteriaceae</taxon>
        <taxon>Escherichia</taxon>
    </lineage>
</organism>
<evidence type="ECO:0000255" key="1">
    <source>
        <dbReference type="HAMAP-Rule" id="MF_00394"/>
    </source>
</evidence>
<sequence>MNQRNASMTVIGAGSYGTALAITLARNGHEVVLWGHDPEHIATLKRDRCNAAFLPDVPFPDTLHLESDLATALAASRNILVVVPSHVFGEVLRQIKPLMRPDARLVWATKGLEAETGRLLQDVAREALGDQIPLAVISGPTFAKELAAGLPTAISLASTDQTFADDLQQLLHCGKSFRVYSNPDFIGVQLGGAVKNVIAIGAGMSDGIGFGANARTALITRGLAEMSRLGAALGADPATFMGMAGLGDLVLTCTDNQSRNRRFGMMLGQGMDVQSAQEKIGQVVEGYRNTKEVRELAHRFGVEMPITEEIYQVLYCGKNAREAALTLLGRARKDERSSH</sequence>
<name>GPDA_ESCF3</name>
<dbReference type="EC" id="1.1.1.94" evidence="1"/>
<dbReference type="EMBL" id="CU928158">
    <property type="protein sequence ID" value="CAQ91074.1"/>
    <property type="molecule type" value="Genomic_DNA"/>
</dbReference>
<dbReference type="RefSeq" id="WP_001076206.1">
    <property type="nucleotide sequence ID" value="NC_011740.1"/>
</dbReference>
<dbReference type="SMR" id="B7LTL5"/>
<dbReference type="GeneID" id="75059793"/>
<dbReference type="KEGG" id="efe:EFER_3602"/>
<dbReference type="HOGENOM" id="CLU_033449_0_2_6"/>
<dbReference type="OrthoDB" id="9812273at2"/>
<dbReference type="UniPathway" id="UPA00940"/>
<dbReference type="Proteomes" id="UP000000745">
    <property type="component" value="Chromosome"/>
</dbReference>
<dbReference type="GO" id="GO:0005829">
    <property type="term" value="C:cytosol"/>
    <property type="evidence" value="ECO:0007669"/>
    <property type="project" value="TreeGrafter"/>
</dbReference>
<dbReference type="GO" id="GO:0047952">
    <property type="term" value="F:glycerol-3-phosphate dehydrogenase [NAD(P)+] activity"/>
    <property type="evidence" value="ECO:0007669"/>
    <property type="project" value="UniProtKB-UniRule"/>
</dbReference>
<dbReference type="GO" id="GO:0051287">
    <property type="term" value="F:NAD binding"/>
    <property type="evidence" value="ECO:0007669"/>
    <property type="project" value="InterPro"/>
</dbReference>
<dbReference type="GO" id="GO:0005975">
    <property type="term" value="P:carbohydrate metabolic process"/>
    <property type="evidence" value="ECO:0007669"/>
    <property type="project" value="InterPro"/>
</dbReference>
<dbReference type="GO" id="GO:0046167">
    <property type="term" value="P:glycerol-3-phosphate biosynthetic process"/>
    <property type="evidence" value="ECO:0007669"/>
    <property type="project" value="UniProtKB-UniRule"/>
</dbReference>
<dbReference type="GO" id="GO:0046168">
    <property type="term" value="P:glycerol-3-phosphate catabolic process"/>
    <property type="evidence" value="ECO:0007669"/>
    <property type="project" value="InterPro"/>
</dbReference>
<dbReference type="GO" id="GO:0046474">
    <property type="term" value="P:glycerophospholipid biosynthetic process"/>
    <property type="evidence" value="ECO:0007669"/>
    <property type="project" value="TreeGrafter"/>
</dbReference>
<dbReference type="FunFam" id="1.10.1040.10:FF:000001">
    <property type="entry name" value="Glycerol-3-phosphate dehydrogenase [NAD(P)+]"/>
    <property type="match status" value="1"/>
</dbReference>
<dbReference type="FunFam" id="3.40.50.720:FF:000019">
    <property type="entry name" value="Glycerol-3-phosphate dehydrogenase [NAD(P)+]"/>
    <property type="match status" value="1"/>
</dbReference>
<dbReference type="Gene3D" id="1.10.1040.10">
    <property type="entry name" value="N-(1-d-carboxylethyl)-l-norvaline Dehydrogenase, domain 2"/>
    <property type="match status" value="1"/>
</dbReference>
<dbReference type="Gene3D" id="3.40.50.720">
    <property type="entry name" value="NAD(P)-binding Rossmann-like Domain"/>
    <property type="match status" value="1"/>
</dbReference>
<dbReference type="HAMAP" id="MF_00394">
    <property type="entry name" value="NAD_Glyc3P_dehydrog"/>
    <property type="match status" value="1"/>
</dbReference>
<dbReference type="InterPro" id="IPR008927">
    <property type="entry name" value="6-PGluconate_DH-like_C_sf"/>
</dbReference>
<dbReference type="InterPro" id="IPR013328">
    <property type="entry name" value="6PGD_dom2"/>
</dbReference>
<dbReference type="InterPro" id="IPR006168">
    <property type="entry name" value="G3P_DH_NAD-dep"/>
</dbReference>
<dbReference type="InterPro" id="IPR006109">
    <property type="entry name" value="G3P_DH_NAD-dep_C"/>
</dbReference>
<dbReference type="InterPro" id="IPR011128">
    <property type="entry name" value="G3P_DH_NAD-dep_N"/>
</dbReference>
<dbReference type="InterPro" id="IPR036291">
    <property type="entry name" value="NAD(P)-bd_dom_sf"/>
</dbReference>
<dbReference type="NCBIfam" id="NF000939">
    <property type="entry name" value="PRK00094.1-1"/>
    <property type="match status" value="1"/>
</dbReference>
<dbReference type="NCBIfam" id="NF000940">
    <property type="entry name" value="PRK00094.1-2"/>
    <property type="match status" value="1"/>
</dbReference>
<dbReference type="NCBIfam" id="NF000942">
    <property type="entry name" value="PRK00094.1-4"/>
    <property type="match status" value="1"/>
</dbReference>
<dbReference type="PANTHER" id="PTHR11728">
    <property type="entry name" value="GLYCEROL-3-PHOSPHATE DEHYDROGENASE"/>
    <property type="match status" value="1"/>
</dbReference>
<dbReference type="PANTHER" id="PTHR11728:SF1">
    <property type="entry name" value="GLYCEROL-3-PHOSPHATE DEHYDROGENASE [NAD(+)] 2, CHLOROPLASTIC"/>
    <property type="match status" value="1"/>
</dbReference>
<dbReference type="Pfam" id="PF07479">
    <property type="entry name" value="NAD_Gly3P_dh_C"/>
    <property type="match status" value="1"/>
</dbReference>
<dbReference type="Pfam" id="PF01210">
    <property type="entry name" value="NAD_Gly3P_dh_N"/>
    <property type="match status" value="1"/>
</dbReference>
<dbReference type="PIRSF" id="PIRSF000114">
    <property type="entry name" value="Glycerol-3-P_dh"/>
    <property type="match status" value="1"/>
</dbReference>
<dbReference type="PRINTS" id="PR00077">
    <property type="entry name" value="GPDHDRGNASE"/>
</dbReference>
<dbReference type="SUPFAM" id="SSF48179">
    <property type="entry name" value="6-phosphogluconate dehydrogenase C-terminal domain-like"/>
    <property type="match status" value="1"/>
</dbReference>
<dbReference type="SUPFAM" id="SSF51735">
    <property type="entry name" value="NAD(P)-binding Rossmann-fold domains"/>
    <property type="match status" value="1"/>
</dbReference>
<dbReference type="PROSITE" id="PS00957">
    <property type="entry name" value="NAD_G3PDH"/>
    <property type="match status" value="1"/>
</dbReference>
<proteinExistence type="inferred from homology"/>
<feature type="chain" id="PRO_1000190150" description="Glycerol-3-phosphate dehydrogenase [NAD(P)+]">
    <location>
        <begin position="1"/>
        <end position="339"/>
    </location>
</feature>
<feature type="active site" description="Proton acceptor" evidence="1">
    <location>
        <position position="195"/>
    </location>
</feature>
<feature type="binding site" evidence="1">
    <location>
        <position position="15"/>
    </location>
    <ligand>
        <name>NADPH</name>
        <dbReference type="ChEBI" id="CHEBI:57783"/>
    </ligand>
</feature>
<feature type="binding site" evidence="1">
    <location>
        <position position="16"/>
    </location>
    <ligand>
        <name>NADPH</name>
        <dbReference type="ChEBI" id="CHEBI:57783"/>
    </ligand>
</feature>
<feature type="binding site" evidence="1">
    <location>
        <position position="36"/>
    </location>
    <ligand>
        <name>NADPH</name>
        <dbReference type="ChEBI" id="CHEBI:57783"/>
    </ligand>
</feature>
<feature type="binding site" evidence="1">
    <location>
        <position position="110"/>
    </location>
    <ligand>
        <name>NADPH</name>
        <dbReference type="ChEBI" id="CHEBI:57783"/>
    </ligand>
</feature>
<feature type="binding site" evidence="1">
    <location>
        <position position="110"/>
    </location>
    <ligand>
        <name>sn-glycerol 3-phosphate</name>
        <dbReference type="ChEBI" id="CHEBI:57597"/>
    </ligand>
</feature>
<feature type="binding site" evidence="1">
    <location>
        <position position="139"/>
    </location>
    <ligand>
        <name>sn-glycerol 3-phosphate</name>
        <dbReference type="ChEBI" id="CHEBI:57597"/>
    </ligand>
</feature>
<feature type="binding site" evidence="1">
    <location>
        <position position="141"/>
    </location>
    <ligand>
        <name>sn-glycerol 3-phosphate</name>
        <dbReference type="ChEBI" id="CHEBI:57597"/>
    </ligand>
</feature>
<feature type="binding site" evidence="1">
    <location>
        <position position="143"/>
    </location>
    <ligand>
        <name>NADPH</name>
        <dbReference type="ChEBI" id="CHEBI:57783"/>
    </ligand>
</feature>
<feature type="binding site" evidence="1">
    <location>
        <position position="195"/>
    </location>
    <ligand>
        <name>sn-glycerol 3-phosphate</name>
        <dbReference type="ChEBI" id="CHEBI:57597"/>
    </ligand>
</feature>
<feature type="binding site" evidence="1">
    <location>
        <position position="248"/>
    </location>
    <ligand>
        <name>sn-glycerol 3-phosphate</name>
        <dbReference type="ChEBI" id="CHEBI:57597"/>
    </ligand>
</feature>
<feature type="binding site" evidence="1">
    <location>
        <position position="258"/>
    </location>
    <ligand>
        <name>sn-glycerol 3-phosphate</name>
        <dbReference type="ChEBI" id="CHEBI:57597"/>
    </ligand>
</feature>
<feature type="binding site" evidence="1">
    <location>
        <position position="259"/>
    </location>
    <ligand>
        <name>NADPH</name>
        <dbReference type="ChEBI" id="CHEBI:57783"/>
    </ligand>
</feature>
<feature type="binding site" evidence="1">
    <location>
        <position position="259"/>
    </location>
    <ligand>
        <name>sn-glycerol 3-phosphate</name>
        <dbReference type="ChEBI" id="CHEBI:57597"/>
    </ligand>
</feature>
<feature type="binding site" evidence="1">
    <location>
        <position position="260"/>
    </location>
    <ligand>
        <name>sn-glycerol 3-phosphate</name>
        <dbReference type="ChEBI" id="CHEBI:57597"/>
    </ligand>
</feature>
<feature type="binding site" evidence="1">
    <location>
        <position position="283"/>
    </location>
    <ligand>
        <name>NADPH</name>
        <dbReference type="ChEBI" id="CHEBI:57783"/>
    </ligand>
</feature>
<feature type="binding site" evidence="1">
    <location>
        <position position="285"/>
    </location>
    <ligand>
        <name>NADPH</name>
        <dbReference type="ChEBI" id="CHEBI:57783"/>
    </ligand>
</feature>
<gene>
    <name evidence="1" type="primary">gpsA</name>
    <name type="ordered locus">EFER_3602</name>
</gene>
<accession>B7LTL5</accession>